<gene>
    <name evidence="1" type="primary">polC</name>
    <name type="ordered locus">SAG1911</name>
</gene>
<name>DPO3_STRA5</name>
<reference key="1">
    <citation type="journal article" date="2002" name="Proc. Natl. Acad. Sci. U.S.A.">
        <title>Complete genome sequence and comparative genomic analysis of an emerging human pathogen, serotype V Streptococcus agalactiae.</title>
        <authorList>
            <person name="Tettelin H."/>
            <person name="Masignani V."/>
            <person name="Cieslewicz M.J."/>
            <person name="Eisen J.A."/>
            <person name="Peterson S.N."/>
            <person name="Wessels M.R."/>
            <person name="Paulsen I.T."/>
            <person name="Nelson K.E."/>
            <person name="Margarit I."/>
            <person name="Read T.D."/>
            <person name="Madoff L.C."/>
            <person name="Wolf A.M."/>
            <person name="Beanan M.J."/>
            <person name="Brinkac L.M."/>
            <person name="Daugherty S.C."/>
            <person name="DeBoy R.T."/>
            <person name="Durkin A.S."/>
            <person name="Kolonay J.F."/>
            <person name="Madupu R."/>
            <person name="Lewis M.R."/>
            <person name="Radune D."/>
            <person name="Fedorova N.B."/>
            <person name="Scanlan D."/>
            <person name="Khouri H.M."/>
            <person name="Mulligan S."/>
            <person name="Carty H.A."/>
            <person name="Cline R.T."/>
            <person name="Van Aken S.E."/>
            <person name="Gill J."/>
            <person name="Scarselli M."/>
            <person name="Mora M."/>
            <person name="Iacobini E.T."/>
            <person name="Brettoni C."/>
            <person name="Galli G."/>
            <person name="Mariani M."/>
            <person name="Vegni F."/>
            <person name="Maione D."/>
            <person name="Rinaudo D."/>
            <person name="Rappuoli R."/>
            <person name="Telford J.L."/>
            <person name="Kasper D.L."/>
            <person name="Grandi G."/>
            <person name="Fraser C.M."/>
        </authorList>
    </citation>
    <scope>NUCLEOTIDE SEQUENCE [LARGE SCALE GENOMIC DNA]</scope>
    <source>
        <strain>ATCC BAA-611 / 2603 V/R</strain>
    </source>
</reference>
<keyword id="KW-0963">Cytoplasm</keyword>
<keyword id="KW-0235">DNA replication</keyword>
<keyword id="KW-0239">DNA-directed DNA polymerase</keyword>
<keyword id="KW-0269">Exonuclease</keyword>
<keyword id="KW-0378">Hydrolase</keyword>
<keyword id="KW-0540">Nuclease</keyword>
<keyword id="KW-0548">Nucleotidyltransferase</keyword>
<keyword id="KW-1185">Reference proteome</keyword>
<keyword id="KW-0808">Transferase</keyword>
<evidence type="ECO:0000255" key="1">
    <source>
        <dbReference type="HAMAP-Rule" id="MF_00356"/>
    </source>
</evidence>
<evidence type="ECO:0000256" key="2">
    <source>
        <dbReference type="SAM" id="MobiDB-lite"/>
    </source>
</evidence>
<protein>
    <recommendedName>
        <fullName evidence="1">DNA polymerase III PolC-type</fullName>
        <shortName evidence="1">PolIII</shortName>
        <ecNumber evidence="1">2.7.7.7</ecNumber>
    </recommendedName>
</protein>
<comment type="function">
    <text evidence="1">Required for replicative DNA synthesis. This DNA polymerase also exhibits 3' to 5' exonuclease activity.</text>
</comment>
<comment type="catalytic activity">
    <reaction evidence="1">
        <text>DNA(n) + a 2'-deoxyribonucleoside 5'-triphosphate = DNA(n+1) + diphosphate</text>
        <dbReference type="Rhea" id="RHEA:22508"/>
        <dbReference type="Rhea" id="RHEA-COMP:17339"/>
        <dbReference type="Rhea" id="RHEA-COMP:17340"/>
        <dbReference type="ChEBI" id="CHEBI:33019"/>
        <dbReference type="ChEBI" id="CHEBI:61560"/>
        <dbReference type="ChEBI" id="CHEBI:173112"/>
        <dbReference type="EC" id="2.7.7.7"/>
    </reaction>
</comment>
<comment type="subcellular location">
    <subcellularLocation>
        <location evidence="1">Cytoplasm</location>
    </subcellularLocation>
</comment>
<comment type="similarity">
    <text evidence="1">Belongs to the DNA polymerase type-C family. PolC subfamily.</text>
</comment>
<organism>
    <name type="scientific">Streptococcus agalactiae serotype V (strain ATCC BAA-611 / 2603 V/R)</name>
    <dbReference type="NCBI Taxonomy" id="208435"/>
    <lineage>
        <taxon>Bacteria</taxon>
        <taxon>Bacillati</taxon>
        <taxon>Bacillota</taxon>
        <taxon>Bacilli</taxon>
        <taxon>Lactobacillales</taxon>
        <taxon>Streptococcaceae</taxon>
        <taxon>Streptococcus</taxon>
    </lineage>
</organism>
<accession>P63984</accession>
<accession>Q8CX24</accession>
<accession>Q8DXE0</accession>
<sequence>MSELFKKLMDQIEMPLEIKNSSVFSSADIIEVKVHSLSRLWEFHFSFPELLPIEVYRELQTRLVNSFEKADIKATFDIRAETIDFSDDLLQDYYQQAFCEPLCNSASFKSSFSQLKVHYNGSQMIISAPQFVNNNHFRQNHLPRLEQQFSLFGFGKLAIDMVSDEQMTQDLKSSFETNREQLLEKANQEAMQALEAQKSLEDSAPPSEEVTPTQNYDFKERIKQRQAGFEKAEITPMIEVTTEENRIVFEGMVFSVERKTTRTGRHIINFKMTDYTSSFAMQKWAKDDEELKKYDMISKGSWLRVRGNIENNNFTKSLTMNVQDIKEIVHHERKDLMPADQKRVEFHAHTNMSTMDALPTVESLIDTAAKWGHPAIAITDHANVQSFPHGYHRAKKAGIKAIFGLEANIVEDKVPISYNEVDMNLHEATYVVFDVETTGLSAANNDLIQIAASKMFKGNIIEQFDEFIDPGHPLSAFTTELTGITDNHVRGSKPILQVLQEFQNFCQGTVLVAHNATFDVGFMNANYERHNLPLITQPVIDTLEFARNLYPEYKRHGLGPLTKRFQVALEHHHMANYDAEATGRLLFIFLKEARENRDVTNLMELNTKLVAEDSYKKARIKHATIYVQNQVGLKNIFKLVSLSNVKYFEGVARIPRSVLDAHREGLLLGTACSDGEVFDALLSNGIDAAVTLAKYYDFIEVMPPAIYRPLVVRDLIKDEVGIQQIIRDLIEVGRRLDKPVLATGNVHYIEPEDEIYREIIVRSLGQGAMINRTIGRGEDAQPAPLPKAHFRTTNEMLDEFAFLGKDLAYEIVVTNTNTFADRFEDVEVVKGDLYTPFVDRAEERVAELTYAKAFEIYGNPLPDIIDLRIEKELASILGNGFAVIYLASQMLVQRSNERGYLVGSRGSVGSSFVATMIGITEVNPMPPHYVCPNCQHSEFITDGSCGSGYDLPNKNCPKCGTLYKKDGQDIPFETFLGFDGDKVPDIDLNFSGDDQPSAHLDVRDIFGEEYAFRAGTVGTVAEKTAFGFVKGYERDYNKFYNDAEVERLATGAAGVKRSTGQHPGGIVVIPNYMDVYDFTPVQYPADDMTAAWQTTHFNFHDIDENVLKLDILGHDDPTMIRKLQDLSGIDPSNILPDDPDVMKLFSGTEVLGVTEEQIGTPTGMLGIPEFGTNFVRGMVNETHPTTFAELLQLSGLSHGTDVWLGNAQDLIKEGIATLSTVIGCRDDIMVYLMHAGLQPKMAFTIMERVRKGLWLKISEDERNGYIQAMRDNNVPDWYIESCGKIKYMFPKAHAAAYVLMALRVAYFKVHYPIFYYCAYFSIRAKAFELRTMSAGLDAVKARMKDITEKRQRNEATNVENDLFTTLELVNEMLERGFKFGKLDLYRSHATDFIIEEDTLIPPFVAMEGLGENVAKQIVRAREDGEFLSKTELRKRGGVSSTLVEKFDEMGILGNLPEDNQLSLFDDFF</sequence>
<proteinExistence type="inferred from homology"/>
<feature type="chain" id="PRO_0000204596" description="DNA polymerase III PolC-type">
    <location>
        <begin position="1"/>
        <end position="1468"/>
    </location>
</feature>
<feature type="domain" description="Exonuclease">
    <location>
        <begin position="430"/>
        <end position="586"/>
    </location>
</feature>
<feature type="region of interest" description="Disordered" evidence="2">
    <location>
        <begin position="197"/>
        <end position="217"/>
    </location>
</feature>
<dbReference type="EC" id="2.7.7.7" evidence="1"/>
<dbReference type="EMBL" id="AE009948">
    <property type="protein sequence ID" value="AAN00773.1"/>
    <property type="molecule type" value="Genomic_DNA"/>
</dbReference>
<dbReference type="RefSeq" id="NP_688900.1">
    <property type="nucleotide sequence ID" value="NC_004116.1"/>
</dbReference>
<dbReference type="RefSeq" id="WP_001292137.1">
    <property type="nucleotide sequence ID" value="NC_004116.1"/>
</dbReference>
<dbReference type="SMR" id="P63984"/>
<dbReference type="STRING" id="208435.SAG1911"/>
<dbReference type="KEGG" id="sag:SAG1911"/>
<dbReference type="PATRIC" id="fig|208435.3.peg.1915"/>
<dbReference type="HOGENOM" id="CLU_003297_2_0_9"/>
<dbReference type="OrthoDB" id="9804290at2"/>
<dbReference type="Proteomes" id="UP000000821">
    <property type="component" value="Chromosome"/>
</dbReference>
<dbReference type="GO" id="GO:0005737">
    <property type="term" value="C:cytoplasm"/>
    <property type="evidence" value="ECO:0007669"/>
    <property type="project" value="UniProtKB-SubCell"/>
</dbReference>
<dbReference type="GO" id="GO:0008408">
    <property type="term" value="F:3'-5' exonuclease activity"/>
    <property type="evidence" value="ECO:0007669"/>
    <property type="project" value="UniProtKB-UniRule"/>
</dbReference>
<dbReference type="GO" id="GO:0003677">
    <property type="term" value="F:DNA binding"/>
    <property type="evidence" value="ECO:0007669"/>
    <property type="project" value="UniProtKB-UniRule"/>
</dbReference>
<dbReference type="GO" id="GO:0003887">
    <property type="term" value="F:DNA-directed DNA polymerase activity"/>
    <property type="evidence" value="ECO:0007669"/>
    <property type="project" value="UniProtKB-UniRule"/>
</dbReference>
<dbReference type="GO" id="GO:0006261">
    <property type="term" value="P:DNA-templated DNA replication"/>
    <property type="evidence" value="ECO:0007669"/>
    <property type="project" value="UniProtKB-UniRule"/>
</dbReference>
<dbReference type="CDD" id="cd07435">
    <property type="entry name" value="PHP_PolIIIA_POLC"/>
    <property type="match status" value="1"/>
</dbReference>
<dbReference type="CDD" id="cd04484">
    <property type="entry name" value="polC_OBF"/>
    <property type="match status" value="1"/>
</dbReference>
<dbReference type="FunFam" id="3.30.420.10:FF:000045">
    <property type="entry name" value="3'-5' exonuclease DinG"/>
    <property type="match status" value="1"/>
</dbReference>
<dbReference type="Gene3D" id="1.10.150.870">
    <property type="match status" value="1"/>
</dbReference>
<dbReference type="Gene3D" id="3.30.1900.20">
    <property type="match status" value="1"/>
</dbReference>
<dbReference type="Gene3D" id="6.10.140.1510">
    <property type="match status" value="1"/>
</dbReference>
<dbReference type="Gene3D" id="3.20.20.140">
    <property type="entry name" value="Metal-dependent hydrolases"/>
    <property type="match status" value="1"/>
</dbReference>
<dbReference type="Gene3D" id="2.40.50.140">
    <property type="entry name" value="Nucleic acid-binding proteins"/>
    <property type="match status" value="1"/>
</dbReference>
<dbReference type="Gene3D" id="1.10.150.700">
    <property type="entry name" value="PolC, middle finger domain"/>
    <property type="match status" value="1"/>
</dbReference>
<dbReference type="Gene3D" id="3.30.420.10">
    <property type="entry name" value="Ribonuclease H-like superfamily/Ribonuclease H"/>
    <property type="match status" value="1"/>
</dbReference>
<dbReference type="HAMAP" id="MF_00356">
    <property type="entry name" value="DNApol_PolC"/>
    <property type="match status" value="1"/>
</dbReference>
<dbReference type="InterPro" id="IPR011708">
    <property type="entry name" value="DNA_pol3_alpha_NTPase_dom"/>
</dbReference>
<dbReference type="InterPro" id="IPR040982">
    <property type="entry name" value="DNA_pol3_finger"/>
</dbReference>
<dbReference type="InterPro" id="IPR024754">
    <property type="entry name" value="DNA_PolC-like_N_II"/>
</dbReference>
<dbReference type="InterPro" id="IPR028112">
    <property type="entry name" value="DNA_PolC-type_N_I"/>
</dbReference>
<dbReference type="InterPro" id="IPR004805">
    <property type="entry name" value="DnaE2/DnaE/PolC"/>
</dbReference>
<dbReference type="InterPro" id="IPR029460">
    <property type="entry name" value="DNAPol_HHH"/>
</dbReference>
<dbReference type="InterPro" id="IPR006054">
    <property type="entry name" value="DnaQ"/>
</dbReference>
<dbReference type="InterPro" id="IPR013520">
    <property type="entry name" value="Exonuclease_RNaseT/DNA_pol3"/>
</dbReference>
<dbReference type="InterPro" id="IPR012340">
    <property type="entry name" value="NA-bd_OB-fold"/>
</dbReference>
<dbReference type="InterPro" id="IPR004365">
    <property type="entry name" value="NA-bd_OB_tRNA"/>
</dbReference>
<dbReference type="InterPro" id="IPR004013">
    <property type="entry name" value="PHP_dom"/>
</dbReference>
<dbReference type="InterPro" id="IPR003141">
    <property type="entry name" value="Pol/His_phosphatase_N"/>
</dbReference>
<dbReference type="InterPro" id="IPR006308">
    <property type="entry name" value="Pol_III_a_PolC-type_gram_pos"/>
</dbReference>
<dbReference type="InterPro" id="IPR044923">
    <property type="entry name" value="PolC_middle_finger_sf"/>
</dbReference>
<dbReference type="InterPro" id="IPR012337">
    <property type="entry name" value="RNaseH-like_sf"/>
</dbReference>
<dbReference type="InterPro" id="IPR036397">
    <property type="entry name" value="RNaseH_sf"/>
</dbReference>
<dbReference type="NCBIfam" id="TIGR00573">
    <property type="entry name" value="dnaq"/>
    <property type="match status" value="1"/>
</dbReference>
<dbReference type="NCBIfam" id="TIGR01405">
    <property type="entry name" value="polC_Gram_pos"/>
    <property type="match status" value="1"/>
</dbReference>
<dbReference type="NCBIfam" id="NF001688">
    <property type="entry name" value="PRK00448.1"/>
    <property type="match status" value="1"/>
</dbReference>
<dbReference type="PANTHER" id="PTHR32294:SF5">
    <property type="entry name" value="DNA POLYMERASE III POLC-TYPE"/>
    <property type="match status" value="1"/>
</dbReference>
<dbReference type="PANTHER" id="PTHR32294">
    <property type="entry name" value="DNA POLYMERASE III SUBUNIT ALPHA"/>
    <property type="match status" value="1"/>
</dbReference>
<dbReference type="Pfam" id="PF14480">
    <property type="entry name" value="DNA_pol3_a_NI"/>
    <property type="match status" value="1"/>
</dbReference>
<dbReference type="Pfam" id="PF11490">
    <property type="entry name" value="DNA_pol3_a_NII"/>
    <property type="match status" value="1"/>
</dbReference>
<dbReference type="Pfam" id="PF07733">
    <property type="entry name" value="DNA_pol3_alpha"/>
    <property type="match status" value="1"/>
</dbReference>
<dbReference type="Pfam" id="PF17657">
    <property type="entry name" value="DNA_pol3_finger"/>
    <property type="match status" value="1"/>
</dbReference>
<dbReference type="Pfam" id="PF14579">
    <property type="entry name" value="HHH_6"/>
    <property type="match status" value="1"/>
</dbReference>
<dbReference type="Pfam" id="PF02811">
    <property type="entry name" value="PHP"/>
    <property type="match status" value="2"/>
</dbReference>
<dbReference type="Pfam" id="PF00929">
    <property type="entry name" value="RNase_T"/>
    <property type="match status" value="1"/>
</dbReference>
<dbReference type="Pfam" id="PF01336">
    <property type="entry name" value="tRNA_anti-codon"/>
    <property type="match status" value="1"/>
</dbReference>
<dbReference type="SMART" id="SM00479">
    <property type="entry name" value="EXOIII"/>
    <property type="match status" value="1"/>
</dbReference>
<dbReference type="SMART" id="SM00481">
    <property type="entry name" value="POLIIIAc"/>
    <property type="match status" value="1"/>
</dbReference>
<dbReference type="SUPFAM" id="SSF50249">
    <property type="entry name" value="Nucleic acid-binding proteins"/>
    <property type="match status" value="1"/>
</dbReference>
<dbReference type="SUPFAM" id="SSF53098">
    <property type="entry name" value="Ribonuclease H-like"/>
    <property type="match status" value="1"/>
</dbReference>